<keyword id="KW-0560">Oxidoreductase</keyword>
<keyword id="KW-1185">Reference proteome</keyword>
<organism>
    <name type="scientific">Synechococcus sp. (strain CC9902)</name>
    <dbReference type="NCBI Taxonomy" id="316279"/>
    <lineage>
        <taxon>Bacteria</taxon>
        <taxon>Bacillati</taxon>
        <taxon>Cyanobacteriota</taxon>
        <taxon>Cyanophyceae</taxon>
        <taxon>Synechococcales</taxon>
        <taxon>Synechococcaceae</taxon>
        <taxon>Synechococcus</taxon>
    </lineage>
</organism>
<dbReference type="EC" id="1.3.7.2" evidence="1"/>
<dbReference type="EMBL" id="CP000097">
    <property type="protein sequence ID" value="ABB26863.1"/>
    <property type="molecule type" value="Genomic_DNA"/>
</dbReference>
<dbReference type="RefSeq" id="WP_011360665.1">
    <property type="nucleotide sequence ID" value="NC_007513.1"/>
</dbReference>
<dbReference type="SMR" id="Q3AUU5"/>
<dbReference type="STRING" id="316279.Syncc9902_1906"/>
<dbReference type="KEGG" id="sye:Syncc9902_1906"/>
<dbReference type="eggNOG" id="ENOG502Z8J9">
    <property type="taxonomic scope" value="Bacteria"/>
</dbReference>
<dbReference type="HOGENOM" id="CLU_086208_0_0_3"/>
<dbReference type="OrthoDB" id="527390at2"/>
<dbReference type="Proteomes" id="UP000002712">
    <property type="component" value="Chromosome"/>
</dbReference>
<dbReference type="GO" id="GO:0050617">
    <property type="term" value="F:15,16-dihydrobiliverdin:ferredoxin oxidoreductase activity"/>
    <property type="evidence" value="ECO:0007669"/>
    <property type="project" value="UniProtKB-UniRule"/>
</dbReference>
<dbReference type="GO" id="GO:0050897">
    <property type="term" value="F:cobalt ion binding"/>
    <property type="evidence" value="ECO:0007669"/>
    <property type="project" value="InterPro"/>
</dbReference>
<dbReference type="GO" id="GO:0010024">
    <property type="term" value="P:phytochromobilin biosynthetic process"/>
    <property type="evidence" value="ECO:0007669"/>
    <property type="project" value="InterPro"/>
</dbReference>
<dbReference type="Gene3D" id="3.40.1500.20">
    <property type="match status" value="1"/>
</dbReference>
<dbReference type="HAMAP" id="MF_00792">
    <property type="entry name" value="PebA"/>
    <property type="match status" value="1"/>
</dbReference>
<dbReference type="InterPro" id="IPR023658">
    <property type="entry name" value="DiHydbiliverdin_OxRdtase"/>
</dbReference>
<dbReference type="InterPro" id="IPR009249">
    <property type="entry name" value="Ferredoxin-dep_bilin_Rdtase"/>
</dbReference>
<dbReference type="NCBIfam" id="NF009720">
    <property type="entry name" value="PRK13247.1"/>
    <property type="match status" value="1"/>
</dbReference>
<dbReference type="PANTHER" id="PTHR34557">
    <property type="entry name" value="PHYTOCHROMOBILIN:FERREDOXIN OXIDOREDUCTASE, CHLOROPLASTIC"/>
    <property type="match status" value="1"/>
</dbReference>
<dbReference type="PANTHER" id="PTHR34557:SF1">
    <property type="entry name" value="PHYTOCHROMOBILIN:FERREDOXIN OXIDOREDUCTASE, CHLOROPLASTIC"/>
    <property type="match status" value="1"/>
</dbReference>
<dbReference type="Pfam" id="PF05996">
    <property type="entry name" value="Fe_bilin_red"/>
    <property type="match status" value="1"/>
</dbReference>
<feature type="chain" id="PRO_1000046925" description="15,16-dihydrobiliverdin:ferredoxin oxidoreductase">
    <location>
        <begin position="1"/>
        <end position="235"/>
    </location>
</feature>
<evidence type="ECO:0000255" key="1">
    <source>
        <dbReference type="HAMAP-Rule" id="MF_00792"/>
    </source>
</evidence>
<sequence length="235" mass="26588">MFDPFLDQLHADITARGGTPAEVPDGLAECHSAKGASVIRSWLWQVPGFRRWRVTRLDAGESLQVLNSVAYPDYGFDHPLMGVDLLWFGARQKLVAVLDFQPLVQNEAYFDRYFDGLKALNRQFPDLNGEETMRSFDPNQYFSSWLLFCRGGAEQAQTSLPPAFSAFLKAYWALHDAAKNNPATIAADEVKRLQENYDVYSAERDPAHGLFTSHFGKNWSDQFLHEFLFPASGQS</sequence>
<protein>
    <recommendedName>
        <fullName evidence="1">15,16-dihydrobiliverdin:ferredoxin oxidoreductase</fullName>
        <ecNumber evidence="1">1.3.7.2</ecNumber>
    </recommendedName>
</protein>
<accession>Q3AUU5</accession>
<gene>
    <name evidence="1" type="primary">pebA</name>
    <name type="ordered locus">Syncc9902_1906</name>
</gene>
<reference key="1">
    <citation type="submission" date="2005-08" db="EMBL/GenBank/DDBJ databases">
        <title>Complete sequence of Synechococcus sp. CC9902.</title>
        <authorList>
            <person name="Copeland A."/>
            <person name="Lucas S."/>
            <person name="Lapidus A."/>
            <person name="Barry K."/>
            <person name="Detter J.C."/>
            <person name="Glavina T."/>
            <person name="Hammon N."/>
            <person name="Israni S."/>
            <person name="Pitluck S."/>
            <person name="Martinez M."/>
            <person name="Schmutz J."/>
            <person name="Larimer F."/>
            <person name="Land M."/>
            <person name="Kyrpides N."/>
            <person name="Ivanova N."/>
            <person name="Richardson P."/>
        </authorList>
    </citation>
    <scope>NUCLEOTIDE SEQUENCE [LARGE SCALE GENOMIC DNA]</scope>
    <source>
        <strain>CC9902</strain>
    </source>
</reference>
<name>PEBA_SYNS9</name>
<comment type="function">
    <text evidence="1">Catalyzes the two-electron reduction of biliverdin IX-alpha at the C15 methine bridge.</text>
</comment>
<comment type="catalytic activity">
    <reaction evidence="1">
        <text>15,16-dihydrobiliverdin + oxidized 2[4Fe-4S]-[ferredoxin] = biliverdin IXalpha + reduced 2[4Fe-4S]-[ferredoxin] + 2 H(+)</text>
        <dbReference type="Rhea" id="RHEA:10168"/>
        <dbReference type="Rhea" id="RHEA-COMP:10002"/>
        <dbReference type="Rhea" id="RHEA-COMP:10004"/>
        <dbReference type="ChEBI" id="CHEBI:15378"/>
        <dbReference type="ChEBI" id="CHEBI:33722"/>
        <dbReference type="ChEBI" id="CHEBI:33723"/>
        <dbReference type="ChEBI" id="CHEBI:57899"/>
        <dbReference type="ChEBI" id="CHEBI:57991"/>
        <dbReference type="EC" id="1.3.7.2"/>
    </reaction>
</comment>
<comment type="similarity">
    <text evidence="1">Belongs to the HY2 family.</text>
</comment>
<proteinExistence type="inferred from homology"/>